<protein>
    <recommendedName>
        <fullName evidence="1">Large ribosomal subunit protein bL12</fullName>
    </recommendedName>
    <alternativeName>
        <fullName evidence="2">50S ribosomal protein L7/L12</fullName>
    </alternativeName>
</protein>
<dbReference type="EMBL" id="CP000548">
    <property type="protein sequence ID" value="ABO06738.1"/>
    <property type="molecule type" value="Genomic_DNA"/>
</dbReference>
<dbReference type="RefSeq" id="WP_004198366.1">
    <property type="nucleotide sequence ID" value="NZ_CP007802.1"/>
</dbReference>
<dbReference type="SMR" id="A3MRU4"/>
<dbReference type="GeneID" id="93061842"/>
<dbReference type="KEGG" id="bmaz:BM44_3051"/>
<dbReference type="KEGG" id="bmn:BMA10247_3468"/>
<dbReference type="PATRIC" id="fig|320389.8.peg.3423"/>
<dbReference type="GO" id="GO:0022625">
    <property type="term" value="C:cytosolic large ribosomal subunit"/>
    <property type="evidence" value="ECO:0007669"/>
    <property type="project" value="TreeGrafter"/>
</dbReference>
<dbReference type="GO" id="GO:0003729">
    <property type="term" value="F:mRNA binding"/>
    <property type="evidence" value="ECO:0007669"/>
    <property type="project" value="TreeGrafter"/>
</dbReference>
<dbReference type="GO" id="GO:0003735">
    <property type="term" value="F:structural constituent of ribosome"/>
    <property type="evidence" value="ECO:0007669"/>
    <property type="project" value="InterPro"/>
</dbReference>
<dbReference type="GO" id="GO:0006412">
    <property type="term" value="P:translation"/>
    <property type="evidence" value="ECO:0007669"/>
    <property type="project" value="UniProtKB-UniRule"/>
</dbReference>
<dbReference type="CDD" id="cd00387">
    <property type="entry name" value="Ribosomal_L7_L12"/>
    <property type="match status" value="1"/>
</dbReference>
<dbReference type="FunFam" id="3.30.1390.10:FF:000001">
    <property type="entry name" value="50S ribosomal protein L7/L12"/>
    <property type="match status" value="1"/>
</dbReference>
<dbReference type="Gene3D" id="3.30.1390.10">
    <property type="match status" value="1"/>
</dbReference>
<dbReference type="Gene3D" id="1.20.5.710">
    <property type="entry name" value="Single helix bin"/>
    <property type="match status" value="1"/>
</dbReference>
<dbReference type="HAMAP" id="MF_00368">
    <property type="entry name" value="Ribosomal_bL12"/>
    <property type="match status" value="1"/>
</dbReference>
<dbReference type="InterPro" id="IPR000206">
    <property type="entry name" value="Ribosomal_bL12"/>
</dbReference>
<dbReference type="InterPro" id="IPR013823">
    <property type="entry name" value="Ribosomal_bL12_C"/>
</dbReference>
<dbReference type="InterPro" id="IPR014719">
    <property type="entry name" value="Ribosomal_bL12_C/ClpS-like"/>
</dbReference>
<dbReference type="InterPro" id="IPR008932">
    <property type="entry name" value="Ribosomal_bL12_oligo"/>
</dbReference>
<dbReference type="InterPro" id="IPR036235">
    <property type="entry name" value="Ribosomal_bL12_oligo_N_sf"/>
</dbReference>
<dbReference type="NCBIfam" id="TIGR00855">
    <property type="entry name" value="L12"/>
    <property type="match status" value="1"/>
</dbReference>
<dbReference type="PANTHER" id="PTHR45987">
    <property type="entry name" value="39S RIBOSOMAL PROTEIN L12"/>
    <property type="match status" value="1"/>
</dbReference>
<dbReference type="PANTHER" id="PTHR45987:SF4">
    <property type="entry name" value="LARGE RIBOSOMAL SUBUNIT PROTEIN BL12M"/>
    <property type="match status" value="1"/>
</dbReference>
<dbReference type="Pfam" id="PF00542">
    <property type="entry name" value="Ribosomal_L12"/>
    <property type="match status" value="1"/>
</dbReference>
<dbReference type="Pfam" id="PF16320">
    <property type="entry name" value="Ribosomal_L12_N"/>
    <property type="match status" value="1"/>
</dbReference>
<dbReference type="SUPFAM" id="SSF54736">
    <property type="entry name" value="ClpS-like"/>
    <property type="match status" value="1"/>
</dbReference>
<dbReference type="SUPFAM" id="SSF48300">
    <property type="entry name" value="Ribosomal protein L7/12, oligomerisation (N-terminal) domain"/>
    <property type="match status" value="1"/>
</dbReference>
<gene>
    <name evidence="1" type="primary">rplL</name>
    <name type="ordered locus">BMA10247_3468</name>
</gene>
<keyword id="KW-0687">Ribonucleoprotein</keyword>
<keyword id="KW-0689">Ribosomal protein</keyword>
<name>RL7_BURM7</name>
<sequence length="124" mass="12559">MAIAKEDILAAVEGMTVLELNELVKAFEEKFGVSAAAVAVAGPAAGGAAAAAEEKTEFTVVLAEAGSNKVAVIKAVREITGLGLKEAKDLVDGAPKPVKEGVDKASADEAKKKLEDAGAKVELK</sequence>
<accession>A3MRU4</accession>
<evidence type="ECO:0000255" key="1">
    <source>
        <dbReference type="HAMAP-Rule" id="MF_00368"/>
    </source>
</evidence>
<evidence type="ECO:0000305" key="2"/>
<comment type="function">
    <text evidence="1">Forms part of the ribosomal stalk which helps the ribosome interact with GTP-bound translation factors. Is thus essential for accurate translation.</text>
</comment>
<comment type="subunit">
    <text evidence="1">Homodimer. Part of the ribosomal stalk of the 50S ribosomal subunit. Forms a multimeric L10(L12)X complex, where L10 forms an elongated spine to which 2 to 4 L12 dimers bind in a sequential fashion. Binds GTP-bound translation factors.</text>
</comment>
<comment type="similarity">
    <text evidence="1">Belongs to the bacterial ribosomal protein bL12 family.</text>
</comment>
<organism>
    <name type="scientific">Burkholderia mallei (strain NCTC 10247)</name>
    <dbReference type="NCBI Taxonomy" id="320389"/>
    <lineage>
        <taxon>Bacteria</taxon>
        <taxon>Pseudomonadati</taxon>
        <taxon>Pseudomonadota</taxon>
        <taxon>Betaproteobacteria</taxon>
        <taxon>Burkholderiales</taxon>
        <taxon>Burkholderiaceae</taxon>
        <taxon>Burkholderia</taxon>
        <taxon>pseudomallei group</taxon>
    </lineage>
</organism>
<feature type="chain" id="PRO_1000006971" description="Large ribosomal subunit protein bL12">
    <location>
        <begin position="1"/>
        <end position="124"/>
    </location>
</feature>
<reference key="1">
    <citation type="journal article" date="2010" name="Genome Biol. Evol.">
        <title>Continuing evolution of Burkholderia mallei through genome reduction and large-scale rearrangements.</title>
        <authorList>
            <person name="Losada L."/>
            <person name="Ronning C.M."/>
            <person name="DeShazer D."/>
            <person name="Woods D."/>
            <person name="Fedorova N."/>
            <person name="Kim H.S."/>
            <person name="Shabalina S.A."/>
            <person name="Pearson T.R."/>
            <person name="Brinkac L."/>
            <person name="Tan P."/>
            <person name="Nandi T."/>
            <person name="Crabtree J."/>
            <person name="Badger J."/>
            <person name="Beckstrom-Sternberg S."/>
            <person name="Saqib M."/>
            <person name="Schutzer S.E."/>
            <person name="Keim P."/>
            <person name="Nierman W.C."/>
        </authorList>
    </citation>
    <scope>NUCLEOTIDE SEQUENCE [LARGE SCALE GENOMIC DNA]</scope>
    <source>
        <strain>NCTC 10247</strain>
    </source>
</reference>
<proteinExistence type="inferred from homology"/>